<sequence length="295" mass="34209">MKIQTDAANVLQRASAQLKSGLLKEKPLWYDIIAKYPPTSTNDLIKKSHVYEGKSDPRNNSIIYKYPNSNNKNNNVLFKTRPSNKELKSKNHNIHKLPKLKFIEDSLRKIFYQQHPWELSRPKNLIDNGNGNNNEKCDWSHMLQLHKPLDGESVVQRTLWLLKNNTTKGLTMVEAYDKARFEFYKLRMSEEMESHVAKEESTMYGSVFTSTTVNWNLSKEQEYINDWTIIAKERTQVIEANMNKSSAPIGSVVEEEKSQSSLFEDLLSNDNLQSEPEVEQSGQQQQQEQPKQETN</sequence>
<evidence type="ECO:0000250" key="1">
    <source>
        <dbReference type="UniProtKB" id="P40496"/>
    </source>
</evidence>
<evidence type="ECO:0000256" key="2">
    <source>
        <dbReference type="SAM" id="MobiDB-lite"/>
    </source>
</evidence>
<evidence type="ECO:0000305" key="3"/>
<feature type="chain" id="PRO_0000343546" description="Small ribosomal subunit protein mS23">
    <location>
        <begin position="1"/>
        <end position="295"/>
    </location>
</feature>
<feature type="region of interest" description="Disordered" evidence="2">
    <location>
        <begin position="249"/>
        <end position="295"/>
    </location>
</feature>
<feature type="compositionally biased region" description="Low complexity" evidence="2">
    <location>
        <begin position="273"/>
        <end position="289"/>
    </location>
</feature>
<dbReference type="EMBL" id="CP017623">
    <property type="protein sequence ID" value="AOW26529.1"/>
    <property type="molecule type" value="Genomic_DNA"/>
</dbReference>
<dbReference type="RefSeq" id="XP_723437.2">
    <property type="nucleotide sequence ID" value="XM_718344.2"/>
</dbReference>
<dbReference type="SMR" id="Q5AQ57"/>
<dbReference type="FunCoup" id="Q5AQ57">
    <property type="interactions" value="170"/>
</dbReference>
<dbReference type="STRING" id="237561.Q5AQ57"/>
<dbReference type="EnsemblFungi" id="C1_08920W_A-T">
    <property type="protein sequence ID" value="C1_08920W_A-T-p1"/>
    <property type="gene ID" value="C1_08920W_A"/>
</dbReference>
<dbReference type="GeneID" id="3634910"/>
<dbReference type="KEGG" id="cal:CAALFM_C108920WA"/>
<dbReference type="CGD" id="CAL0000181949">
    <property type="gene designation" value="orf19.12214"/>
</dbReference>
<dbReference type="VEuPathDB" id="FungiDB:C1_08920W_A"/>
<dbReference type="eggNOG" id="ENOG502RZQQ">
    <property type="taxonomic scope" value="Eukaryota"/>
</dbReference>
<dbReference type="HOGENOM" id="CLU_081350_0_0_1"/>
<dbReference type="InParanoid" id="Q5AQ57"/>
<dbReference type="OrthoDB" id="5542239at2759"/>
<dbReference type="PRO" id="PR:Q5AQ57"/>
<dbReference type="Proteomes" id="UP000000559">
    <property type="component" value="Chromosome 1"/>
</dbReference>
<dbReference type="GO" id="GO:0005763">
    <property type="term" value="C:mitochondrial small ribosomal subunit"/>
    <property type="evidence" value="ECO:0007669"/>
    <property type="project" value="EnsemblFungi"/>
</dbReference>
<dbReference type="GO" id="GO:0005739">
    <property type="term" value="C:mitochondrion"/>
    <property type="evidence" value="ECO:0000318"/>
    <property type="project" value="GO_Central"/>
</dbReference>
<dbReference type="GO" id="GO:0003735">
    <property type="term" value="F:structural constituent of ribosome"/>
    <property type="evidence" value="ECO:0007669"/>
    <property type="project" value="EnsemblFungi"/>
</dbReference>
<dbReference type="CDD" id="cd23701">
    <property type="entry name" value="At1g26750"/>
    <property type="match status" value="1"/>
</dbReference>
<dbReference type="InterPro" id="IPR016939">
    <property type="entry name" value="Ribosomal_mS23_fun"/>
</dbReference>
<dbReference type="PANTHER" id="PTHR37799">
    <property type="entry name" value="37S RIBOSOMAL PROTEIN S25, MITOCHONDRIAL"/>
    <property type="match status" value="1"/>
</dbReference>
<dbReference type="PANTHER" id="PTHR37799:SF1">
    <property type="entry name" value="SMALL RIBOSOMAL SUBUNIT PROTEIN MS23"/>
    <property type="match status" value="1"/>
</dbReference>
<dbReference type="Pfam" id="PF13741">
    <property type="entry name" value="MRP-S25"/>
    <property type="match status" value="1"/>
</dbReference>
<dbReference type="PIRSF" id="PIRSF029764">
    <property type="entry name" value="RSM25"/>
    <property type="match status" value="1"/>
</dbReference>
<name>RT25_CANAL</name>
<organism>
    <name type="scientific">Candida albicans (strain SC5314 / ATCC MYA-2876)</name>
    <name type="common">Yeast</name>
    <dbReference type="NCBI Taxonomy" id="237561"/>
    <lineage>
        <taxon>Eukaryota</taxon>
        <taxon>Fungi</taxon>
        <taxon>Dikarya</taxon>
        <taxon>Ascomycota</taxon>
        <taxon>Saccharomycotina</taxon>
        <taxon>Pichiomycetes</taxon>
        <taxon>Debaryomycetaceae</taxon>
        <taxon>Candida/Lodderomyces clade</taxon>
        <taxon>Candida</taxon>
    </lineage>
</organism>
<gene>
    <name type="primary">RSM25</name>
    <name type="ordered locus">CAALFM_C108920WA</name>
    <name type="ORF">CaO19.12213</name>
    <name type="ORF">CaO19.12214</name>
    <name type="ORF">CaO19.4751</name>
</gene>
<accession>Q5AQ57</accession>
<accession>A0A1D8PEG1</accession>
<accession>Q5APL4</accession>
<accession>Q5APL5</accession>
<proteinExistence type="inferred from homology"/>
<comment type="function">
    <text evidence="1">Component of the mitochondrial ribosome (mitoribosome), a dedicated translation machinery responsible for the synthesis of mitochondrial genome-encoded proteins, including at least some of the essential transmembrane subunits of the mitochondrial respiratory chain. The mitoribosomes are attached to the mitochondrial inner membrane and translation products are cotranslationally integrated into the membrane.</text>
</comment>
<comment type="subunit">
    <text evidence="1">Component of the mitochondrial small ribosomal subunit (mt-SSU).</text>
</comment>
<comment type="subcellular location">
    <subcellularLocation>
        <location evidence="1">Mitochondrion</location>
    </subcellularLocation>
</comment>
<comment type="similarity">
    <text evidence="3">Belongs to the mitochondrion-specific ribosomal protein mS23 family.</text>
</comment>
<keyword id="KW-0496">Mitochondrion</keyword>
<keyword id="KW-1185">Reference proteome</keyword>
<keyword id="KW-0687">Ribonucleoprotein</keyword>
<keyword id="KW-0689">Ribosomal protein</keyword>
<reference key="1">
    <citation type="journal article" date="2004" name="Proc. Natl. Acad. Sci. U.S.A.">
        <title>The diploid genome sequence of Candida albicans.</title>
        <authorList>
            <person name="Jones T."/>
            <person name="Federspiel N.A."/>
            <person name="Chibana H."/>
            <person name="Dungan J."/>
            <person name="Kalman S."/>
            <person name="Magee B.B."/>
            <person name="Newport G."/>
            <person name="Thorstenson Y.R."/>
            <person name="Agabian N."/>
            <person name="Magee P.T."/>
            <person name="Davis R.W."/>
            <person name="Scherer S."/>
        </authorList>
    </citation>
    <scope>NUCLEOTIDE SEQUENCE [LARGE SCALE GENOMIC DNA]</scope>
    <source>
        <strain>SC5314 / ATCC MYA-2876</strain>
    </source>
</reference>
<reference key="2">
    <citation type="journal article" date="2007" name="Genome Biol.">
        <title>Assembly of the Candida albicans genome into sixteen supercontigs aligned on the eight chromosomes.</title>
        <authorList>
            <person name="van het Hoog M."/>
            <person name="Rast T.J."/>
            <person name="Martchenko M."/>
            <person name="Grindle S."/>
            <person name="Dignard D."/>
            <person name="Hogues H."/>
            <person name="Cuomo C."/>
            <person name="Berriman M."/>
            <person name="Scherer S."/>
            <person name="Magee B.B."/>
            <person name="Whiteway M."/>
            <person name="Chibana H."/>
            <person name="Nantel A."/>
            <person name="Magee P.T."/>
        </authorList>
    </citation>
    <scope>GENOME REANNOTATION</scope>
    <source>
        <strain>SC5314 / ATCC MYA-2876</strain>
    </source>
</reference>
<reference key="3">
    <citation type="journal article" date="2013" name="Genome Biol.">
        <title>Assembly of a phased diploid Candida albicans genome facilitates allele-specific measurements and provides a simple model for repeat and indel structure.</title>
        <authorList>
            <person name="Muzzey D."/>
            <person name="Schwartz K."/>
            <person name="Weissman J.S."/>
            <person name="Sherlock G."/>
        </authorList>
    </citation>
    <scope>NUCLEOTIDE SEQUENCE [LARGE SCALE GENOMIC DNA]</scope>
    <scope>GENOME REANNOTATION</scope>
    <source>
        <strain>SC5314 / ATCC MYA-2876</strain>
    </source>
</reference>
<protein>
    <recommendedName>
        <fullName evidence="1">Small ribosomal subunit protein mS23</fullName>
    </recommendedName>
    <alternativeName>
        <fullName>37S ribosomal protein S25, mitochondrial</fullName>
    </alternativeName>
</protein>